<accession>Q68WI2</accession>
<organism>
    <name type="scientific">Rickettsia typhi (strain ATCC VR-144 / Wilmington)</name>
    <dbReference type="NCBI Taxonomy" id="257363"/>
    <lineage>
        <taxon>Bacteria</taxon>
        <taxon>Pseudomonadati</taxon>
        <taxon>Pseudomonadota</taxon>
        <taxon>Alphaproteobacteria</taxon>
        <taxon>Rickettsiales</taxon>
        <taxon>Rickettsiaceae</taxon>
        <taxon>Rickettsieae</taxon>
        <taxon>Rickettsia</taxon>
        <taxon>typhus group</taxon>
    </lineage>
</organism>
<proteinExistence type="inferred from homology"/>
<evidence type="ECO:0000255" key="1">
    <source>
        <dbReference type="HAMAP-Rule" id="MF_01077"/>
    </source>
</evidence>
<protein>
    <recommendedName>
        <fullName evidence="1">Ribosome maturation factor RimP</fullName>
    </recommendedName>
</protein>
<comment type="function">
    <text evidence="1">Required for maturation of 30S ribosomal subunits.</text>
</comment>
<comment type="subcellular location">
    <subcellularLocation>
        <location evidence="1">Cytoplasm</location>
    </subcellularLocation>
</comment>
<comment type="similarity">
    <text evidence="1">Belongs to the RimP family.</text>
</comment>
<keyword id="KW-0963">Cytoplasm</keyword>
<keyword id="KW-0690">Ribosome biogenesis</keyword>
<gene>
    <name evidence="1" type="primary">rimP</name>
    <name type="ordered locus">RT0541</name>
</gene>
<dbReference type="EMBL" id="AE017197">
    <property type="protein sequence ID" value="AAU04010.1"/>
    <property type="molecule type" value="Genomic_DNA"/>
</dbReference>
<dbReference type="RefSeq" id="WP_011190991.1">
    <property type="nucleotide sequence ID" value="NC_006142.1"/>
</dbReference>
<dbReference type="SMR" id="Q68WI2"/>
<dbReference type="KEGG" id="rty:RT0541"/>
<dbReference type="eggNOG" id="COG0779">
    <property type="taxonomic scope" value="Bacteria"/>
</dbReference>
<dbReference type="HOGENOM" id="CLU_070525_0_2_5"/>
<dbReference type="OrthoDB" id="9805006at2"/>
<dbReference type="Proteomes" id="UP000000604">
    <property type="component" value="Chromosome"/>
</dbReference>
<dbReference type="GO" id="GO:0005829">
    <property type="term" value="C:cytosol"/>
    <property type="evidence" value="ECO:0007669"/>
    <property type="project" value="TreeGrafter"/>
</dbReference>
<dbReference type="GO" id="GO:0000028">
    <property type="term" value="P:ribosomal small subunit assembly"/>
    <property type="evidence" value="ECO:0007669"/>
    <property type="project" value="TreeGrafter"/>
</dbReference>
<dbReference type="GO" id="GO:0006412">
    <property type="term" value="P:translation"/>
    <property type="evidence" value="ECO:0007669"/>
    <property type="project" value="TreeGrafter"/>
</dbReference>
<dbReference type="CDD" id="cd01734">
    <property type="entry name" value="YlxS_C"/>
    <property type="match status" value="1"/>
</dbReference>
<dbReference type="FunFam" id="3.30.300.70:FF:000001">
    <property type="entry name" value="Ribosome maturation factor RimP"/>
    <property type="match status" value="1"/>
</dbReference>
<dbReference type="Gene3D" id="2.30.30.180">
    <property type="entry name" value="Ribosome maturation factor RimP, C-terminal domain"/>
    <property type="match status" value="1"/>
</dbReference>
<dbReference type="Gene3D" id="3.30.300.70">
    <property type="entry name" value="RimP-like superfamily, N-terminal"/>
    <property type="match status" value="1"/>
</dbReference>
<dbReference type="HAMAP" id="MF_01077">
    <property type="entry name" value="RimP"/>
    <property type="match status" value="1"/>
</dbReference>
<dbReference type="InterPro" id="IPR003728">
    <property type="entry name" value="Ribosome_maturation_RimP"/>
</dbReference>
<dbReference type="InterPro" id="IPR028998">
    <property type="entry name" value="RimP_C"/>
</dbReference>
<dbReference type="InterPro" id="IPR036847">
    <property type="entry name" value="RimP_C_sf"/>
</dbReference>
<dbReference type="InterPro" id="IPR028989">
    <property type="entry name" value="RimP_N"/>
</dbReference>
<dbReference type="InterPro" id="IPR035956">
    <property type="entry name" value="RimP_N_sf"/>
</dbReference>
<dbReference type="NCBIfam" id="NF000937">
    <property type="entry name" value="PRK00092.4-3"/>
    <property type="match status" value="1"/>
</dbReference>
<dbReference type="PANTHER" id="PTHR33867">
    <property type="entry name" value="RIBOSOME MATURATION FACTOR RIMP"/>
    <property type="match status" value="1"/>
</dbReference>
<dbReference type="PANTHER" id="PTHR33867:SF1">
    <property type="entry name" value="RIBOSOME MATURATION FACTOR RIMP"/>
    <property type="match status" value="1"/>
</dbReference>
<dbReference type="Pfam" id="PF17384">
    <property type="entry name" value="DUF150_C"/>
    <property type="match status" value="1"/>
</dbReference>
<dbReference type="Pfam" id="PF02576">
    <property type="entry name" value="RimP_N"/>
    <property type="match status" value="1"/>
</dbReference>
<dbReference type="SUPFAM" id="SSF74942">
    <property type="entry name" value="YhbC-like, C-terminal domain"/>
    <property type="match status" value="1"/>
</dbReference>
<dbReference type="SUPFAM" id="SSF75420">
    <property type="entry name" value="YhbC-like, N-terminal domain"/>
    <property type="match status" value="1"/>
</dbReference>
<name>RIMP_RICTY</name>
<feature type="chain" id="PRO_0000229273" description="Ribosome maturation factor RimP">
    <location>
        <begin position="1"/>
        <end position="161"/>
    </location>
</feature>
<reference key="1">
    <citation type="journal article" date="2004" name="J. Bacteriol.">
        <title>Complete genome sequence of Rickettsia typhi and comparison with sequences of other Rickettsiae.</title>
        <authorList>
            <person name="McLeod M.P."/>
            <person name="Qin X."/>
            <person name="Karpathy S.E."/>
            <person name="Gioia J."/>
            <person name="Highlander S.K."/>
            <person name="Fox G.E."/>
            <person name="McNeill T.Z."/>
            <person name="Jiang H."/>
            <person name="Muzny D."/>
            <person name="Jacob L.S."/>
            <person name="Hawes A.C."/>
            <person name="Sodergren E."/>
            <person name="Gill R."/>
            <person name="Hume J."/>
            <person name="Morgan M."/>
            <person name="Fan G."/>
            <person name="Amin A.G."/>
            <person name="Gibbs R.A."/>
            <person name="Hong C."/>
            <person name="Yu X.-J."/>
            <person name="Walker D.H."/>
            <person name="Weinstock G.M."/>
        </authorList>
    </citation>
    <scope>NUCLEOTIDE SEQUENCE [LARGE SCALE GENOMIC DNA]</scope>
    <source>
        <strain>ATCC VR-144 / Wilmington</strain>
    </source>
</reference>
<sequence>MQTIEQQITNIIEESLTDMGFELVLVKFKGVNTKVVEILIDSLNGNKISIEDCTNVSRTISAILDVEDLIEDAYSLEVSSSGIERKLVKFENYNRFLGREVKVKLKALLNGKTLYQGKIIKAENNKIYLKCAEQEVLIDFNLIKNANLVLTEEVFKKLLGS</sequence>